<feature type="chain" id="PRO_0000460417" description="Subtelomeric hrmA-associated cluster protein AFUA_5G14865">
    <location>
        <begin position="1"/>
        <end position="383"/>
    </location>
</feature>
<feature type="domain" description="Myb-like" evidence="1">
    <location>
        <begin position="318"/>
        <end position="364"/>
    </location>
</feature>
<feature type="region of interest" description="Disordered" evidence="2">
    <location>
        <begin position="118"/>
        <end position="145"/>
    </location>
</feature>
<feature type="region of interest" description="Disordered" evidence="2">
    <location>
        <begin position="249"/>
        <end position="318"/>
    </location>
</feature>
<feature type="compositionally biased region" description="Low complexity" evidence="2">
    <location>
        <begin position="119"/>
        <end position="134"/>
    </location>
</feature>
<organism>
    <name type="scientific">Aspergillus fumigatus (strain ATCC MYA-4609 / CBS 101355 / FGSC A1100 / Af293)</name>
    <name type="common">Neosartorya fumigata</name>
    <dbReference type="NCBI Taxonomy" id="330879"/>
    <lineage>
        <taxon>Eukaryota</taxon>
        <taxon>Fungi</taxon>
        <taxon>Dikarya</taxon>
        <taxon>Ascomycota</taxon>
        <taxon>Pezizomycotina</taxon>
        <taxon>Eurotiomycetes</taxon>
        <taxon>Eurotiomycetidae</taxon>
        <taxon>Eurotiales</taxon>
        <taxon>Aspergillaceae</taxon>
        <taxon>Aspergillus</taxon>
        <taxon>Aspergillus subgen. Fumigati</taxon>
    </lineage>
</organism>
<keyword id="KW-0130">Cell adhesion</keyword>
<keyword id="KW-1185">Reference proteome</keyword>
<keyword id="KW-0843">Virulence</keyword>
<evidence type="ECO:0000255" key="1">
    <source>
        <dbReference type="PROSITE-ProRule" id="PRU00133"/>
    </source>
</evidence>
<evidence type="ECO:0000256" key="2">
    <source>
        <dbReference type="SAM" id="MobiDB-lite"/>
    </source>
</evidence>
<evidence type="ECO:0000269" key="3">
    <source>
    </source>
</evidence>
<evidence type="ECO:0000303" key="4">
    <source>
    </source>
</evidence>
<name>HAC1_ASPFU</name>
<sequence>MHTLHLIFEPRPKAPRLHALIVADAFQLPANPSRLLQTTKLECLAASMQRILSHYQPRVRTNHSVLSSRAVAQHLGSDNADPPRPETILYAQNHDPFGRKSSFLPRCADNGLCHADANPVSEVPESPPSTVKSSGDASVSDKDDDGLMDRCMLHDGAKGLLAVPRSKVQTSSGQVAETSPPQLSRKVIQNATSSSLYIKVERSKPSSRKRPSCIALETDEKASGPRIRARLGAKVQPSLGQVVEKFKRQATQHDTGSSMCIKPESARSKPIRRKRPAGAALETDEKASGPQTRARARAEASEASEASSPLPIARSARPYSAAEDDILQTLVARGLAWEEIEKEFGLRFAKRTMRSLQMRWSRKLKLTAPSTRCSKRKRSSASL</sequence>
<reference key="1">
    <citation type="journal article" date="2005" name="Nature">
        <title>Genomic sequence of the pathogenic and allergenic filamentous fungus Aspergillus fumigatus.</title>
        <authorList>
            <person name="Nierman W.C."/>
            <person name="Pain A."/>
            <person name="Anderson M.J."/>
            <person name="Wortman J.R."/>
            <person name="Kim H.S."/>
            <person name="Arroyo J."/>
            <person name="Berriman M."/>
            <person name="Abe K."/>
            <person name="Archer D.B."/>
            <person name="Bermejo C."/>
            <person name="Bennett J.W."/>
            <person name="Bowyer P."/>
            <person name="Chen D."/>
            <person name="Collins M."/>
            <person name="Coulsen R."/>
            <person name="Davies R."/>
            <person name="Dyer P.S."/>
            <person name="Farman M.L."/>
            <person name="Fedorova N."/>
            <person name="Fedorova N.D."/>
            <person name="Feldblyum T.V."/>
            <person name="Fischer R."/>
            <person name="Fosker N."/>
            <person name="Fraser A."/>
            <person name="Garcia J.L."/>
            <person name="Garcia M.J."/>
            <person name="Goble A."/>
            <person name="Goldman G.H."/>
            <person name="Gomi K."/>
            <person name="Griffith-Jones S."/>
            <person name="Gwilliam R."/>
            <person name="Haas B.J."/>
            <person name="Haas H."/>
            <person name="Harris D.E."/>
            <person name="Horiuchi H."/>
            <person name="Huang J."/>
            <person name="Humphray S."/>
            <person name="Jimenez J."/>
            <person name="Keller N."/>
            <person name="Khouri H."/>
            <person name="Kitamoto K."/>
            <person name="Kobayashi T."/>
            <person name="Konzack S."/>
            <person name="Kulkarni R."/>
            <person name="Kumagai T."/>
            <person name="Lafton A."/>
            <person name="Latge J.-P."/>
            <person name="Li W."/>
            <person name="Lord A."/>
            <person name="Lu C."/>
            <person name="Majoros W.H."/>
            <person name="May G.S."/>
            <person name="Miller B.L."/>
            <person name="Mohamoud Y."/>
            <person name="Molina M."/>
            <person name="Monod M."/>
            <person name="Mouyna I."/>
            <person name="Mulligan S."/>
            <person name="Murphy L.D."/>
            <person name="O'Neil S."/>
            <person name="Paulsen I."/>
            <person name="Penalva M.A."/>
            <person name="Pertea M."/>
            <person name="Price C."/>
            <person name="Pritchard B.L."/>
            <person name="Quail M.A."/>
            <person name="Rabbinowitsch E."/>
            <person name="Rawlins N."/>
            <person name="Rajandream M.A."/>
            <person name="Reichard U."/>
            <person name="Renauld H."/>
            <person name="Robson G.D."/>
            <person name="Rodriguez de Cordoba S."/>
            <person name="Rodriguez-Pena J.M."/>
            <person name="Ronning C.M."/>
            <person name="Rutter S."/>
            <person name="Salzberg S.L."/>
            <person name="Sanchez M."/>
            <person name="Sanchez-Ferrero J.C."/>
            <person name="Saunders D."/>
            <person name="Seeger K."/>
            <person name="Squares R."/>
            <person name="Squares S."/>
            <person name="Takeuchi M."/>
            <person name="Tekaia F."/>
            <person name="Turner G."/>
            <person name="Vazquez de Aldana C.R."/>
            <person name="Weidman J."/>
            <person name="White O."/>
            <person name="Woodward J.R."/>
            <person name="Yu J.-H."/>
            <person name="Fraser C.M."/>
            <person name="Galagan J.E."/>
            <person name="Asai K."/>
            <person name="Machida M."/>
            <person name="Hall N."/>
            <person name="Barrell B.G."/>
            <person name="Denning D.W."/>
        </authorList>
    </citation>
    <scope>NUCLEOTIDE SEQUENCE [LARGE SCALE GENOMIC DNA]</scope>
    <source>
        <strain>ATCC MYA-4609 / CBS 101355 / FGSC A1100 / Af293</strain>
    </source>
</reference>
<reference key="2">
    <citation type="journal article" date="2019" name="Nat. Microbiol.">
        <title>Fungal biofilm morphology impacts hypoxia fitness and disease progression.</title>
        <authorList>
            <person name="Kowalski C.H."/>
            <person name="Kerkaert J.D."/>
            <person name="Liu K.W."/>
            <person name="Bond M.C."/>
            <person name="Hartmann R."/>
            <person name="Nadell C.D."/>
            <person name="Stajich J.E."/>
            <person name="Cramer R.A."/>
        </authorList>
    </citation>
    <scope>FUNCTION</scope>
    <scope>INDUCTION</scope>
</reference>
<comment type="function">
    <text evidence="3">Myb-like domain-containing protein; part of the subtelomeric hrmA-associated cluster (HAC) containing genes that alter the hyphal surface (such as reduced total chitin or increased beta-glucan exposure) and perturb inter-hyphal interactions within the developing biofilms, resulting in a loss of vertically aligned polarized growing filaments (PubMed:31548684). Consequently, this hypoxia-typic morphotype (called H-MORPH) with altered biofilm architecture leads to increased hypoxia fitness, increased host inflammation, rapid disease progression, and mortality in a murine model of invasive aspergillosis (PubMed:31548684).</text>
</comment>
<comment type="induction">
    <text evidence="3">Expression is regulated by the hypoxia responsive morphology factor A (hrmA).</text>
</comment>
<accession>A4D9H4</accession>
<proteinExistence type="evidence at transcript level"/>
<dbReference type="EMBL" id="AAHF01000003">
    <property type="protein sequence ID" value="EBA27421.1"/>
    <property type="molecule type" value="Genomic_DNA"/>
</dbReference>
<dbReference type="RefSeq" id="XP_001481524.1">
    <property type="nucleotide sequence ID" value="XM_001481474.1"/>
</dbReference>
<dbReference type="SMR" id="A4D9H4"/>
<dbReference type="EnsemblFungi" id="EBA27421">
    <property type="protein sequence ID" value="EBA27421"/>
    <property type="gene ID" value="AFUA_5G14865"/>
</dbReference>
<dbReference type="GeneID" id="5077187"/>
<dbReference type="KEGG" id="afm:AFUA_5G14865"/>
<dbReference type="HOGENOM" id="CLU_721546_0_0_1"/>
<dbReference type="InParanoid" id="A4D9H4"/>
<dbReference type="OMA" id="HDPFGRK"/>
<dbReference type="OrthoDB" id="4506575at2759"/>
<dbReference type="Proteomes" id="UP000002530">
    <property type="component" value="Chromosome 5"/>
</dbReference>
<dbReference type="GO" id="GO:0007155">
    <property type="term" value="P:cell adhesion"/>
    <property type="evidence" value="ECO:0007669"/>
    <property type="project" value="UniProtKB-KW"/>
</dbReference>
<dbReference type="InterPro" id="IPR001005">
    <property type="entry name" value="SANT/Myb"/>
</dbReference>
<dbReference type="Pfam" id="PF13921">
    <property type="entry name" value="Myb_DNA-bind_6"/>
    <property type="match status" value="1"/>
</dbReference>
<dbReference type="PROSITE" id="PS50090">
    <property type="entry name" value="MYB_LIKE"/>
    <property type="match status" value="1"/>
</dbReference>
<gene>
    <name type="ORF">AFUA_5G14865</name>
</gene>
<protein>
    <recommendedName>
        <fullName evidence="4">Subtelomeric hrmA-associated cluster protein AFUA_5G14865</fullName>
    </recommendedName>
    <alternativeName>
        <fullName evidence="4">Myb-like domain-containing protein AFUA_5G14865</fullName>
    </alternativeName>
</protein>